<name>ACP_PSEPG</name>
<protein>
    <recommendedName>
        <fullName evidence="1">Acyl carrier protein</fullName>
        <shortName evidence="1">ACP</shortName>
    </recommendedName>
</protein>
<dbReference type="EMBL" id="CP000926">
    <property type="protein sequence ID" value="ABY97396.1"/>
    <property type="molecule type" value="Genomic_DNA"/>
</dbReference>
<dbReference type="RefSeq" id="WP_012271163.1">
    <property type="nucleotide sequence ID" value="NC_010322.1"/>
</dbReference>
<dbReference type="SMR" id="B0KF56"/>
<dbReference type="KEGG" id="ppg:PputGB1_1491"/>
<dbReference type="eggNOG" id="COG0236">
    <property type="taxonomic scope" value="Bacteria"/>
</dbReference>
<dbReference type="HOGENOM" id="CLU_108696_5_1_6"/>
<dbReference type="UniPathway" id="UPA00094"/>
<dbReference type="Proteomes" id="UP000002157">
    <property type="component" value="Chromosome"/>
</dbReference>
<dbReference type="GO" id="GO:0005829">
    <property type="term" value="C:cytosol"/>
    <property type="evidence" value="ECO:0007669"/>
    <property type="project" value="TreeGrafter"/>
</dbReference>
<dbReference type="GO" id="GO:0016020">
    <property type="term" value="C:membrane"/>
    <property type="evidence" value="ECO:0007669"/>
    <property type="project" value="GOC"/>
</dbReference>
<dbReference type="GO" id="GO:0000035">
    <property type="term" value="F:acyl binding"/>
    <property type="evidence" value="ECO:0007669"/>
    <property type="project" value="TreeGrafter"/>
</dbReference>
<dbReference type="GO" id="GO:0000036">
    <property type="term" value="F:acyl carrier activity"/>
    <property type="evidence" value="ECO:0007669"/>
    <property type="project" value="UniProtKB-UniRule"/>
</dbReference>
<dbReference type="GO" id="GO:0009245">
    <property type="term" value="P:lipid A biosynthetic process"/>
    <property type="evidence" value="ECO:0007669"/>
    <property type="project" value="TreeGrafter"/>
</dbReference>
<dbReference type="FunFam" id="1.10.1200.10:FF:000001">
    <property type="entry name" value="Acyl carrier protein"/>
    <property type="match status" value="1"/>
</dbReference>
<dbReference type="Gene3D" id="1.10.1200.10">
    <property type="entry name" value="ACP-like"/>
    <property type="match status" value="1"/>
</dbReference>
<dbReference type="HAMAP" id="MF_01217">
    <property type="entry name" value="Acyl_carrier"/>
    <property type="match status" value="1"/>
</dbReference>
<dbReference type="InterPro" id="IPR003231">
    <property type="entry name" value="ACP"/>
</dbReference>
<dbReference type="InterPro" id="IPR036736">
    <property type="entry name" value="ACP-like_sf"/>
</dbReference>
<dbReference type="InterPro" id="IPR009081">
    <property type="entry name" value="PP-bd_ACP"/>
</dbReference>
<dbReference type="InterPro" id="IPR006162">
    <property type="entry name" value="Ppantetheine_attach_site"/>
</dbReference>
<dbReference type="NCBIfam" id="TIGR00517">
    <property type="entry name" value="acyl_carrier"/>
    <property type="match status" value="1"/>
</dbReference>
<dbReference type="NCBIfam" id="NF002148">
    <property type="entry name" value="PRK00982.1-2"/>
    <property type="match status" value="1"/>
</dbReference>
<dbReference type="NCBIfam" id="NF002149">
    <property type="entry name" value="PRK00982.1-3"/>
    <property type="match status" value="1"/>
</dbReference>
<dbReference type="NCBIfam" id="NF002150">
    <property type="entry name" value="PRK00982.1-4"/>
    <property type="match status" value="1"/>
</dbReference>
<dbReference type="NCBIfam" id="NF002151">
    <property type="entry name" value="PRK00982.1-5"/>
    <property type="match status" value="1"/>
</dbReference>
<dbReference type="PANTHER" id="PTHR20863">
    <property type="entry name" value="ACYL CARRIER PROTEIN"/>
    <property type="match status" value="1"/>
</dbReference>
<dbReference type="PANTHER" id="PTHR20863:SF76">
    <property type="entry name" value="CARRIER DOMAIN-CONTAINING PROTEIN"/>
    <property type="match status" value="1"/>
</dbReference>
<dbReference type="Pfam" id="PF00550">
    <property type="entry name" value="PP-binding"/>
    <property type="match status" value="1"/>
</dbReference>
<dbReference type="SUPFAM" id="SSF47336">
    <property type="entry name" value="ACP-like"/>
    <property type="match status" value="1"/>
</dbReference>
<dbReference type="PROSITE" id="PS50075">
    <property type="entry name" value="CARRIER"/>
    <property type="match status" value="1"/>
</dbReference>
<dbReference type="PROSITE" id="PS00012">
    <property type="entry name" value="PHOSPHOPANTETHEINE"/>
    <property type="match status" value="1"/>
</dbReference>
<accession>B0KF56</accession>
<sequence length="78" mass="8715">MSTIEERVKKIVAEQLGVKEDEVTNEKSFVDDLGADSLDTVELVMALEEEFETEIPDEEAEKITTVQAAIDYVNSHKA</sequence>
<gene>
    <name evidence="1" type="primary">acpP</name>
    <name type="ordered locus">PputGB1_1491</name>
</gene>
<organism>
    <name type="scientific">Pseudomonas putida (strain GB-1)</name>
    <dbReference type="NCBI Taxonomy" id="76869"/>
    <lineage>
        <taxon>Bacteria</taxon>
        <taxon>Pseudomonadati</taxon>
        <taxon>Pseudomonadota</taxon>
        <taxon>Gammaproteobacteria</taxon>
        <taxon>Pseudomonadales</taxon>
        <taxon>Pseudomonadaceae</taxon>
        <taxon>Pseudomonas</taxon>
    </lineage>
</organism>
<feature type="chain" id="PRO_1000085608" description="Acyl carrier protein">
    <location>
        <begin position="1"/>
        <end position="78"/>
    </location>
</feature>
<feature type="domain" description="Carrier" evidence="2">
    <location>
        <begin position="2"/>
        <end position="77"/>
    </location>
</feature>
<feature type="modified residue" description="O-(pantetheine 4'-phosphoryl)serine" evidence="2">
    <location>
        <position position="37"/>
    </location>
</feature>
<comment type="function">
    <text evidence="1">Carrier of the growing fatty acid chain in fatty acid biosynthesis.</text>
</comment>
<comment type="pathway">
    <text evidence="1">Lipid metabolism; fatty acid biosynthesis.</text>
</comment>
<comment type="subcellular location">
    <subcellularLocation>
        <location evidence="1">Cytoplasm</location>
    </subcellularLocation>
</comment>
<comment type="PTM">
    <text evidence="1">4'-phosphopantetheine is transferred from CoA to a specific serine of apo-ACP by AcpS. This modification is essential for activity because fatty acids are bound in thioester linkage to the sulfhydryl of the prosthetic group.</text>
</comment>
<comment type="similarity">
    <text evidence="1">Belongs to the acyl carrier protein (ACP) family.</text>
</comment>
<keyword id="KW-0963">Cytoplasm</keyword>
<keyword id="KW-0275">Fatty acid biosynthesis</keyword>
<keyword id="KW-0276">Fatty acid metabolism</keyword>
<keyword id="KW-0444">Lipid biosynthesis</keyword>
<keyword id="KW-0443">Lipid metabolism</keyword>
<keyword id="KW-0596">Phosphopantetheine</keyword>
<keyword id="KW-0597">Phosphoprotein</keyword>
<reference key="1">
    <citation type="submission" date="2008-01" db="EMBL/GenBank/DDBJ databases">
        <title>Complete sequence of Pseudomonas putida GB-1.</title>
        <authorList>
            <consortium name="US DOE Joint Genome Institute"/>
            <person name="Copeland A."/>
            <person name="Lucas S."/>
            <person name="Lapidus A."/>
            <person name="Barry K."/>
            <person name="Glavina del Rio T."/>
            <person name="Dalin E."/>
            <person name="Tice H."/>
            <person name="Pitluck S."/>
            <person name="Bruce D."/>
            <person name="Goodwin L."/>
            <person name="Chertkov O."/>
            <person name="Brettin T."/>
            <person name="Detter J.C."/>
            <person name="Han C."/>
            <person name="Kuske C.R."/>
            <person name="Schmutz J."/>
            <person name="Larimer F."/>
            <person name="Land M."/>
            <person name="Hauser L."/>
            <person name="Kyrpides N."/>
            <person name="Kim E."/>
            <person name="McCarthy J.K."/>
            <person name="Richardson P."/>
        </authorList>
    </citation>
    <scope>NUCLEOTIDE SEQUENCE [LARGE SCALE GENOMIC DNA]</scope>
    <source>
        <strain>GB-1</strain>
    </source>
</reference>
<proteinExistence type="inferred from homology"/>
<evidence type="ECO:0000255" key="1">
    <source>
        <dbReference type="HAMAP-Rule" id="MF_01217"/>
    </source>
</evidence>
<evidence type="ECO:0000255" key="2">
    <source>
        <dbReference type="PROSITE-ProRule" id="PRU00258"/>
    </source>
</evidence>